<reference key="1">
    <citation type="journal article" date="2008" name="Biol. Direct">
        <title>Complete genome sequence of the extremely acidophilic methanotroph isolate V4, Methylacidiphilum infernorum, a representative of the bacterial phylum Verrucomicrobia.</title>
        <authorList>
            <person name="Hou S."/>
            <person name="Makarova K.S."/>
            <person name="Saw J.H."/>
            <person name="Senin P."/>
            <person name="Ly B.V."/>
            <person name="Zhou Z."/>
            <person name="Ren Y."/>
            <person name="Wang J."/>
            <person name="Galperin M.Y."/>
            <person name="Omelchenko M.V."/>
            <person name="Wolf Y.I."/>
            <person name="Yutin N."/>
            <person name="Koonin E.V."/>
            <person name="Stott M.B."/>
            <person name="Mountain B.W."/>
            <person name="Crowe M.A."/>
            <person name="Smirnova A.V."/>
            <person name="Dunfield P.F."/>
            <person name="Feng L."/>
            <person name="Wang L."/>
            <person name="Alam M."/>
        </authorList>
    </citation>
    <scope>NUCLEOTIDE SEQUENCE [LARGE SCALE GENOMIC DNA]</scope>
    <source>
        <strain>Isolate V4</strain>
    </source>
</reference>
<feature type="chain" id="PRO_0000386036" description="GTPase Obg">
    <location>
        <begin position="1"/>
        <end position="365"/>
    </location>
</feature>
<feature type="domain" description="Obg" evidence="2">
    <location>
        <begin position="1"/>
        <end position="177"/>
    </location>
</feature>
<feature type="domain" description="OBG-type G" evidence="1">
    <location>
        <begin position="178"/>
        <end position="348"/>
    </location>
</feature>
<feature type="region of interest" description="Disordered" evidence="3">
    <location>
        <begin position="64"/>
        <end position="85"/>
    </location>
</feature>
<feature type="binding site" evidence="1">
    <location>
        <begin position="184"/>
        <end position="191"/>
    </location>
    <ligand>
        <name>GTP</name>
        <dbReference type="ChEBI" id="CHEBI:37565"/>
    </ligand>
</feature>
<feature type="binding site" evidence="1">
    <location>
        <position position="191"/>
    </location>
    <ligand>
        <name>Mg(2+)</name>
        <dbReference type="ChEBI" id="CHEBI:18420"/>
    </ligand>
</feature>
<feature type="binding site" evidence="1">
    <location>
        <begin position="209"/>
        <end position="213"/>
    </location>
    <ligand>
        <name>GTP</name>
        <dbReference type="ChEBI" id="CHEBI:37565"/>
    </ligand>
</feature>
<feature type="binding site" evidence="1">
    <location>
        <position position="211"/>
    </location>
    <ligand>
        <name>Mg(2+)</name>
        <dbReference type="ChEBI" id="CHEBI:18420"/>
    </ligand>
</feature>
<feature type="binding site" evidence="1">
    <location>
        <begin position="231"/>
        <end position="234"/>
    </location>
    <ligand>
        <name>GTP</name>
        <dbReference type="ChEBI" id="CHEBI:37565"/>
    </ligand>
</feature>
<feature type="binding site" evidence="1">
    <location>
        <begin position="300"/>
        <end position="303"/>
    </location>
    <ligand>
        <name>GTP</name>
        <dbReference type="ChEBI" id="CHEBI:37565"/>
    </ligand>
</feature>
<feature type="binding site" evidence="1">
    <location>
        <begin position="329"/>
        <end position="331"/>
    </location>
    <ligand>
        <name>GTP</name>
        <dbReference type="ChEBI" id="CHEBI:37565"/>
    </ligand>
</feature>
<name>OBG_METI4</name>
<keyword id="KW-0963">Cytoplasm</keyword>
<keyword id="KW-0342">GTP-binding</keyword>
<keyword id="KW-0378">Hydrolase</keyword>
<keyword id="KW-0460">Magnesium</keyword>
<keyword id="KW-0479">Metal-binding</keyword>
<keyword id="KW-0547">Nucleotide-binding</keyword>
<dbReference type="EC" id="3.6.5.-" evidence="1"/>
<dbReference type="EMBL" id="CP000975">
    <property type="protein sequence ID" value="ACD83322.1"/>
    <property type="status" value="ALT_INIT"/>
    <property type="molecule type" value="Genomic_DNA"/>
</dbReference>
<dbReference type="RefSeq" id="WP_048810194.1">
    <property type="nucleotide sequence ID" value="NC_010794.1"/>
</dbReference>
<dbReference type="SMR" id="B3DVG9"/>
<dbReference type="STRING" id="481448.Minf_1268"/>
<dbReference type="KEGG" id="min:Minf_1268"/>
<dbReference type="eggNOG" id="COG0536">
    <property type="taxonomic scope" value="Bacteria"/>
</dbReference>
<dbReference type="HOGENOM" id="CLU_011747_2_0_0"/>
<dbReference type="OrthoDB" id="9807318at2"/>
<dbReference type="Proteomes" id="UP000009149">
    <property type="component" value="Chromosome"/>
</dbReference>
<dbReference type="GO" id="GO:0005737">
    <property type="term" value="C:cytoplasm"/>
    <property type="evidence" value="ECO:0007669"/>
    <property type="project" value="UniProtKB-SubCell"/>
</dbReference>
<dbReference type="GO" id="GO:0005525">
    <property type="term" value="F:GTP binding"/>
    <property type="evidence" value="ECO:0007669"/>
    <property type="project" value="UniProtKB-UniRule"/>
</dbReference>
<dbReference type="GO" id="GO:0003924">
    <property type="term" value="F:GTPase activity"/>
    <property type="evidence" value="ECO:0007669"/>
    <property type="project" value="UniProtKB-UniRule"/>
</dbReference>
<dbReference type="GO" id="GO:0000287">
    <property type="term" value="F:magnesium ion binding"/>
    <property type="evidence" value="ECO:0007669"/>
    <property type="project" value="InterPro"/>
</dbReference>
<dbReference type="GO" id="GO:0042254">
    <property type="term" value="P:ribosome biogenesis"/>
    <property type="evidence" value="ECO:0007669"/>
    <property type="project" value="UniProtKB-UniRule"/>
</dbReference>
<dbReference type="CDD" id="cd01898">
    <property type="entry name" value="Obg"/>
    <property type="match status" value="1"/>
</dbReference>
<dbReference type="FunFam" id="2.70.210.12:FF:000001">
    <property type="entry name" value="GTPase Obg"/>
    <property type="match status" value="1"/>
</dbReference>
<dbReference type="Gene3D" id="2.70.210.12">
    <property type="entry name" value="GTP1/OBG domain"/>
    <property type="match status" value="1"/>
</dbReference>
<dbReference type="Gene3D" id="3.40.50.300">
    <property type="entry name" value="P-loop containing nucleotide triphosphate hydrolases"/>
    <property type="match status" value="1"/>
</dbReference>
<dbReference type="HAMAP" id="MF_01454">
    <property type="entry name" value="GTPase_Obg"/>
    <property type="match status" value="1"/>
</dbReference>
<dbReference type="InterPro" id="IPR031167">
    <property type="entry name" value="G_OBG"/>
</dbReference>
<dbReference type="InterPro" id="IPR006073">
    <property type="entry name" value="GTP-bd"/>
</dbReference>
<dbReference type="InterPro" id="IPR014100">
    <property type="entry name" value="GTP-bd_Obg/CgtA"/>
</dbReference>
<dbReference type="InterPro" id="IPR006074">
    <property type="entry name" value="GTP1-OBG_CS"/>
</dbReference>
<dbReference type="InterPro" id="IPR006169">
    <property type="entry name" value="GTP1_OBG_dom"/>
</dbReference>
<dbReference type="InterPro" id="IPR036726">
    <property type="entry name" value="GTP1_OBG_dom_sf"/>
</dbReference>
<dbReference type="InterPro" id="IPR045086">
    <property type="entry name" value="OBG_GTPase"/>
</dbReference>
<dbReference type="InterPro" id="IPR027417">
    <property type="entry name" value="P-loop_NTPase"/>
</dbReference>
<dbReference type="InterPro" id="IPR005225">
    <property type="entry name" value="Small_GTP-bd"/>
</dbReference>
<dbReference type="NCBIfam" id="NF008956">
    <property type="entry name" value="PRK12299.1"/>
    <property type="match status" value="1"/>
</dbReference>
<dbReference type="NCBIfam" id="TIGR00231">
    <property type="entry name" value="small_GTP"/>
    <property type="match status" value="1"/>
</dbReference>
<dbReference type="PANTHER" id="PTHR11702">
    <property type="entry name" value="DEVELOPMENTALLY REGULATED GTP-BINDING PROTEIN-RELATED"/>
    <property type="match status" value="1"/>
</dbReference>
<dbReference type="PANTHER" id="PTHR11702:SF31">
    <property type="entry name" value="MITOCHONDRIAL RIBOSOME-ASSOCIATED GTPASE 2"/>
    <property type="match status" value="1"/>
</dbReference>
<dbReference type="Pfam" id="PF01018">
    <property type="entry name" value="GTP1_OBG"/>
    <property type="match status" value="2"/>
</dbReference>
<dbReference type="Pfam" id="PF01926">
    <property type="entry name" value="MMR_HSR1"/>
    <property type="match status" value="1"/>
</dbReference>
<dbReference type="PIRSF" id="PIRSF002401">
    <property type="entry name" value="GTP_bd_Obg/CgtA"/>
    <property type="match status" value="1"/>
</dbReference>
<dbReference type="PRINTS" id="PR00326">
    <property type="entry name" value="GTP1OBG"/>
</dbReference>
<dbReference type="SUPFAM" id="SSF82051">
    <property type="entry name" value="Obg GTP-binding protein N-terminal domain"/>
    <property type="match status" value="1"/>
</dbReference>
<dbReference type="SUPFAM" id="SSF52540">
    <property type="entry name" value="P-loop containing nucleoside triphosphate hydrolases"/>
    <property type="match status" value="1"/>
</dbReference>
<dbReference type="PROSITE" id="PS51710">
    <property type="entry name" value="G_OBG"/>
    <property type="match status" value="1"/>
</dbReference>
<dbReference type="PROSITE" id="PS00905">
    <property type="entry name" value="GTP1_OBG"/>
    <property type="match status" value="1"/>
</dbReference>
<dbReference type="PROSITE" id="PS51883">
    <property type="entry name" value="OBG"/>
    <property type="match status" value="1"/>
</dbReference>
<proteinExistence type="inferred from homology"/>
<accession>B3DVG9</accession>
<evidence type="ECO:0000255" key="1">
    <source>
        <dbReference type="HAMAP-Rule" id="MF_01454"/>
    </source>
</evidence>
<evidence type="ECO:0000255" key="2">
    <source>
        <dbReference type="PROSITE-ProRule" id="PRU01231"/>
    </source>
</evidence>
<evidence type="ECO:0000256" key="3">
    <source>
        <dbReference type="SAM" id="MobiDB-lite"/>
    </source>
</evidence>
<evidence type="ECO:0000305" key="4"/>
<comment type="function">
    <text evidence="1">An essential GTPase which binds GTP, GDP and possibly (p)ppGpp with moderate affinity, with high nucleotide exchange rates and a fairly low GTP hydrolysis rate. Plays a role in control of the cell cycle, stress response, ribosome biogenesis and in those bacteria that undergo differentiation, in morphogenesis control.</text>
</comment>
<comment type="cofactor">
    <cofactor evidence="1">
        <name>Mg(2+)</name>
        <dbReference type="ChEBI" id="CHEBI:18420"/>
    </cofactor>
</comment>
<comment type="subunit">
    <text evidence="1">Monomer.</text>
</comment>
<comment type="subcellular location">
    <subcellularLocation>
        <location evidence="1">Cytoplasm</location>
    </subcellularLocation>
</comment>
<comment type="similarity">
    <text evidence="1">Belongs to the TRAFAC class OBG-HflX-like GTPase superfamily. OBG GTPase family.</text>
</comment>
<comment type="sequence caution" evidence="4">
    <conflict type="erroneous initiation">
        <sequence resource="EMBL-CDS" id="ACD83322"/>
    </conflict>
    <text>Extended N-terminus.</text>
</comment>
<protein>
    <recommendedName>
        <fullName evidence="1">GTPase Obg</fullName>
        <ecNumber evidence="1">3.6.5.-</ecNumber>
    </recommendedName>
    <alternativeName>
        <fullName evidence="1">GTP-binding protein Obg</fullName>
    </alternativeName>
</protein>
<sequence length="365" mass="40145">MFTDYVRILAKAGKGGNGCISFCREAFRPHGGPDGGDGGKGGDVILEVNPQLSDLSHFLFSPHQFAEDGQPGKGQKRKGRDGKNLKLEVPPGVVVYQLDPNRIFHSSRDLLPIPKPGEPLKKIGELIEPGMRFILCKGGKGGRGNFQFRSPINQSPRYCEEGEEGQSGQFLLELKTIADVGFVGLPNSGKSTLLRQVTDAKPKTAPYPFTTLKPHVGIVNFDDGYRMSCADIPGLIEGAHQGKGLGFYFLRHIERSHLLVYVLDLADPFLDPVQVFYTLRNELEKYNKELLKKPFLIVGNKVDLVAADSLNHKSLDFNKRTGLSFLPISALKAQGIELFLNSCRKSFESTKKLIPSSPKVLSPLT</sequence>
<gene>
    <name evidence="1" type="primary">obg</name>
    <name type="ordered locus">Minf_1268</name>
</gene>
<organism>
    <name type="scientific">Methylacidiphilum infernorum (isolate V4)</name>
    <name type="common">Methylokorus infernorum (strain V4)</name>
    <dbReference type="NCBI Taxonomy" id="481448"/>
    <lineage>
        <taxon>Bacteria</taxon>
        <taxon>Pseudomonadati</taxon>
        <taxon>Verrucomicrobiota</taxon>
        <taxon>Methylacidiphilae</taxon>
        <taxon>Methylacidiphilales</taxon>
        <taxon>Methylacidiphilaceae</taxon>
        <taxon>Methylacidiphilum (ex Ratnadevi et al. 2023)</taxon>
    </lineage>
</organism>